<evidence type="ECO:0000250" key="1">
    <source>
        <dbReference type="UniProtKB" id="P04179"/>
    </source>
</evidence>
<evidence type="ECO:0000250" key="2">
    <source>
        <dbReference type="UniProtKB" id="P0A0J3"/>
    </source>
</evidence>
<evidence type="ECO:0000250" key="3">
    <source>
        <dbReference type="UniProtKB" id="Q9UQX0"/>
    </source>
</evidence>
<evidence type="ECO:0000269" key="4">
    <source>
    </source>
</evidence>
<evidence type="ECO:0000269" key="5">
    <source ref="6"/>
</evidence>
<evidence type="ECO:0000305" key="6"/>
<evidence type="ECO:0007744" key="7">
    <source>
    </source>
</evidence>
<evidence type="ECO:0007829" key="8">
    <source>
        <dbReference type="PDB" id="4F6E"/>
    </source>
</evidence>
<keyword id="KW-0002">3D-structure</keyword>
<keyword id="KW-0049">Antioxidant</keyword>
<keyword id="KW-0903">Direct protein sequencing</keyword>
<keyword id="KW-0464">Manganese</keyword>
<keyword id="KW-0479">Metal-binding</keyword>
<keyword id="KW-0496">Mitochondrion</keyword>
<keyword id="KW-0560">Oxidoreductase</keyword>
<keyword id="KW-0597">Phosphoprotein</keyword>
<keyword id="KW-1185">Reference proteome</keyword>
<keyword id="KW-0809">Transit peptide</keyword>
<comment type="function">
    <text evidence="1">Destroys superoxide anion radicals which are normally produced within the cells and which are toxic to biological systems.</text>
</comment>
<comment type="catalytic activity">
    <reaction evidence="2">
        <text>2 superoxide + 2 H(+) = H2O2 + O2</text>
        <dbReference type="Rhea" id="RHEA:20696"/>
        <dbReference type="ChEBI" id="CHEBI:15378"/>
        <dbReference type="ChEBI" id="CHEBI:15379"/>
        <dbReference type="ChEBI" id="CHEBI:16240"/>
        <dbReference type="ChEBI" id="CHEBI:18421"/>
        <dbReference type="EC" id="1.15.1.1"/>
    </reaction>
</comment>
<comment type="cofactor">
    <cofactor evidence="3">
        <name>Mn(2+)</name>
        <dbReference type="ChEBI" id="CHEBI:29035"/>
    </cofactor>
    <text evidence="3">Binds 1 Mn(2+) ion per subunit.</text>
</comment>
<comment type="subunit">
    <text evidence="1">Homotetramer.</text>
</comment>
<comment type="subcellular location">
    <subcellularLocation>
        <location evidence="3">Mitochondrion matrix</location>
    </subcellularLocation>
</comment>
<comment type="miscellaneous">
    <text evidence="4">Present with 10900 molecules/cell in log phase SD medium.</text>
</comment>
<comment type="similarity">
    <text evidence="6">Belongs to the iron/manganese superoxide dismutase family.</text>
</comment>
<sequence length="233" mass="25774">MFAKTAAANLTKKGGLSLLSTTARRTKVTLPDLKWDFGALEPYISGQINELHYTKHHQTYVNGFNTAVDQFQELSDLLAKEPSPANARKMIAIQQNIKFHGGGFTNHCLFWENLAPESQGGGEPPTGALAKAIDEQFGSLDELIKLTNTKLAGVQGSGWAFIVKNLSNGGKLDVVQTYNQDTVTGPLVPLVAIDAWEHAYYLQYQNKKADYFKAIWNVVNWKEASRRFDAGKI</sequence>
<accession>P00447</accession>
<accession>D3DKV3</accession>
<proteinExistence type="evidence at protein level"/>
<feature type="transit peptide" description="Mitochondrion" evidence="5">
    <location>
        <begin position="1"/>
        <end position="26"/>
    </location>
</feature>
<feature type="chain" id="PRO_0000032888" description="Superoxide dismutase [Mn], mitochondrial">
    <location>
        <begin position="27"/>
        <end position="233"/>
    </location>
</feature>
<feature type="binding site" evidence="1">
    <location>
        <position position="52"/>
    </location>
    <ligand>
        <name>Mn(2+)</name>
        <dbReference type="ChEBI" id="CHEBI:29035"/>
    </ligand>
</feature>
<feature type="binding site" evidence="1">
    <location>
        <position position="107"/>
    </location>
    <ligand>
        <name>Mn(2+)</name>
        <dbReference type="ChEBI" id="CHEBI:29035"/>
    </ligand>
</feature>
<feature type="binding site" evidence="1">
    <location>
        <position position="194"/>
    </location>
    <ligand>
        <name>Mn(2+)</name>
        <dbReference type="ChEBI" id="CHEBI:29035"/>
    </ligand>
</feature>
<feature type="binding site" evidence="1">
    <location>
        <position position="198"/>
    </location>
    <ligand>
        <name>Mn(2+)</name>
        <dbReference type="ChEBI" id="CHEBI:29035"/>
    </ligand>
</feature>
<feature type="modified residue" description="Phosphothreonine" evidence="7">
    <location>
        <position position="147"/>
    </location>
</feature>
<feature type="modified residue" description="Phosphothreonine" evidence="7">
    <location>
        <position position="149"/>
    </location>
</feature>
<feature type="helix" evidence="8">
    <location>
        <begin position="37"/>
        <end position="40"/>
    </location>
</feature>
<feature type="turn" evidence="8">
    <location>
        <begin position="41"/>
        <end position="43"/>
    </location>
</feature>
<feature type="helix" evidence="8">
    <location>
        <begin position="46"/>
        <end position="54"/>
    </location>
</feature>
<feature type="helix" evidence="8">
    <location>
        <begin position="57"/>
        <end position="79"/>
    </location>
</feature>
<feature type="helix" evidence="8">
    <location>
        <begin position="84"/>
        <end position="88"/>
    </location>
</feature>
<feature type="helix" evidence="8">
    <location>
        <begin position="91"/>
        <end position="97"/>
    </location>
</feature>
<feature type="helix" evidence="8">
    <location>
        <begin position="100"/>
        <end position="112"/>
    </location>
</feature>
<feature type="helix" evidence="8">
    <location>
        <begin position="117"/>
        <end position="119"/>
    </location>
</feature>
<feature type="turn" evidence="8">
    <location>
        <begin position="120"/>
        <end position="122"/>
    </location>
</feature>
<feature type="helix" evidence="8">
    <location>
        <begin position="127"/>
        <end position="130"/>
    </location>
</feature>
<feature type="helix" evidence="8">
    <location>
        <begin position="133"/>
        <end position="137"/>
    </location>
</feature>
<feature type="helix" evidence="8">
    <location>
        <begin position="140"/>
        <end position="144"/>
    </location>
</feature>
<feature type="turn" evidence="8">
    <location>
        <begin position="147"/>
        <end position="149"/>
    </location>
</feature>
<feature type="strand" evidence="8">
    <location>
        <begin position="156"/>
        <end position="165"/>
    </location>
</feature>
<feature type="helix" evidence="8">
    <location>
        <begin position="166"/>
        <end position="168"/>
    </location>
</feature>
<feature type="strand" evidence="8">
    <location>
        <begin position="173"/>
        <end position="178"/>
    </location>
</feature>
<feature type="strand" evidence="8">
    <location>
        <begin position="187"/>
        <end position="194"/>
    </location>
</feature>
<feature type="helix" evidence="8">
    <location>
        <begin position="197"/>
        <end position="199"/>
    </location>
</feature>
<feature type="helix" evidence="8">
    <location>
        <begin position="201"/>
        <end position="204"/>
    </location>
</feature>
<feature type="helix" evidence="8">
    <location>
        <begin position="209"/>
        <end position="212"/>
    </location>
</feature>
<feature type="helix" evidence="8">
    <location>
        <begin position="215"/>
        <end position="218"/>
    </location>
</feature>
<feature type="helix" evidence="8">
    <location>
        <begin position="224"/>
        <end position="230"/>
    </location>
</feature>
<gene>
    <name type="primary">SOD2</name>
    <name type="ordered locus">YHR008C</name>
</gene>
<organism>
    <name type="scientific">Saccharomyces cerevisiae (strain ATCC 204508 / S288c)</name>
    <name type="common">Baker's yeast</name>
    <dbReference type="NCBI Taxonomy" id="559292"/>
    <lineage>
        <taxon>Eukaryota</taxon>
        <taxon>Fungi</taxon>
        <taxon>Dikarya</taxon>
        <taxon>Ascomycota</taxon>
        <taxon>Saccharomycotina</taxon>
        <taxon>Saccharomycetes</taxon>
        <taxon>Saccharomycetales</taxon>
        <taxon>Saccharomycetaceae</taxon>
        <taxon>Saccharomyces</taxon>
    </lineage>
</organism>
<dbReference type="EC" id="1.15.1.1" evidence="2"/>
<dbReference type="EMBL" id="X02156">
    <property type="protein sequence ID" value="CAA26092.1"/>
    <property type="molecule type" value="Genomic_DNA"/>
</dbReference>
<dbReference type="EMBL" id="U10400">
    <property type="protein sequence ID" value="AAB68939.1"/>
    <property type="molecule type" value="Genomic_DNA"/>
</dbReference>
<dbReference type="EMBL" id="M24079">
    <property type="protein sequence ID" value="AAA35065.1"/>
    <property type="molecule type" value="Genomic_DNA"/>
</dbReference>
<dbReference type="EMBL" id="AY557821">
    <property type="protein sequence ID" value="AAS56147.1"/>
    <property type="molecule type" value="Genomic_DNA"/>
</dbReference>
<dbReference type="EMBL" id="BK006934">
    <property type="protein sequence ID" value="DAA06697.1"/>
    <property type="molecule type" value="Genomic_DNA"/>
</dbReference>
<dbReference type="PIR" id="A00521">
    <property type="entry name" value="DSBYN"/>
</dbReference>
<dbReference type="RefSeq" id="NP_011872.1">
    <property type="nucleotide sequence ID" value="NM_001179138.1"/>
</dbReference>
<dbReference type="PDB" id="3BFR">
    <property type="method" value="X-ray"/>
    <property type="resolution" value="2.05 A"/>
    <property type="chains" value="A=27-233"/>
</dbReference>
<dbReference type="PDB" id="3LSU">
    <property type="method" value="X-ray"/>
    <property type="resolution" value="1.90 A"/>
    <property type="chains" value="A/B/C/D=27-233"/>
</dbReference>
<dbReference type="PDB" id="3RN4">
    <property type="method" value="X-ray"/>
    <property type="resolution" value="1.79 A"/>
    <property type="chains" value="A=19-233"/>
</dbReference>
<dbReference type="PDB" id="4E4E">
    <property type="method" value="X-ray"/>
    <property type="resolution" value="1.88 A"/>
    <property type="chains" value="A/B/C/D=27-233"/>
</dbReference>
<dbReference type="PDB" id="4F6E">
    <property type="method" value="X-ray"/>
    <property type="resolution" value="1.60 A"/>
    <property type="chains" value="A/B/C/D=28-233"/>
</dbReference>
<dbReference type="PDBsum" id="3BFR"/>
<dbReference type="PDBsum" id="3LSU"/>
<dbReference type="PDBsum" id="3RN4"/>
<dbReference type="PDBsum" id="4E4E"/>
<dbReference type="PDBsum" id="4F6E"/>
<dbReference type="SMR" id="P00447"/>
<dbReference type="BioGRID" id="36435">
    <property type="interactions" value="258"/>
</dbReference>
<dbReference type="DIP" id="DIP-4905N"/>
<dbReference type="FunCoup" id="P00447">
    <property type="interactions" value="803"/>
</dbReference>
<dbReference type="IntAct" id="P00447">
    <property type="interactions" value="20"/>
</dbReference>
<dbReference type="MINT" id="P00447"/>
<dbReference type="STRING" id="4932.YHR008C"/>
<dbReference type="Allergome" id="867">
    <property type="allergen name" value="Sac c MnSOD"/>
</dbReference>
<dbReference type="GlyGen" id="P00447">
    <property type="glycosylation" value="1 site"/>
</dbReference>
<dbReference type="iPTMnet" id="P00447"/>
<dbReference type="PaxDb" id="4932-YHR008C"/>
<dbReference type="PeptideAtlas" id="P00447"/>
<dbReference type="TopDownProteomics" id="P00447"/>
<dbReference type="EnsemblFungi" id="YHR008C_mRNA">
    <property type="protein sequence ID" value="YHR008C"/>
    <property type="gene ID" value="YHR008C"/>
</dbReference>
<dbReference type="GeneID" id="856399"/>
<dbReference type="KEGG" id="sce:YHR008C"/>
<dbReference type="AGR" id="SGD:S000001050"/>
<dbReference type="SGD" id="S000001050">
    <property type="gene designation" value="SOD2"/>
</dbReference>
<dbReference type="VEuPathDB" id="FungiDB:YHR008C"/>
<dbReference type="eggNOG" id="KOG0876">
    <property type="taxonomic scope" value="Eukaryota"/>
</dbReference>
<dbReference type="HOGENOM" id="CLU_031625_2_1_1"/>
<dbReference type="InParanoid" id="P00447"/>
<dbReference type="OMA" id="DSLINWD"/>
<dbReference type="OrthoDB" id="239262at2759"/>
<dbReference type="BioCyc" id="YEAST:MONOMER3O-1642"/>
<dbReference type="Reactome" id="R-SCE-2151201">
    <property type="pathway name" value="Transcriptional activation of mitochondrial biogenesis"/>
</dbReference>
<dbReference type="Reactome" id="R-SCE-3299685">
    <property type="pathway name" value="Detoxification of Reactive Oxygen Species"/>
</dbReference>
<dbReference type="BioGRID-ORCS" id="856399">
    <property type="hits" value="9 hits in 10 CRISPR screens"/>
</dbReference>
<dbReference type="EvolutionaryTrace" id="P00447"/>
<dbReference type="PRO" id="PR:P00447"/>
<dbReference type="Proteomes" id="UP000002311">
    <property type="component" value="Chromosome VIII"/>
</dbReference>
<dbReference type="RNAct" id="P00447">
    <property type="molecule type" value="protein"/>
</dbReference>
<dbReference type="GO" id="GO:0005759">
    <property type="term" value="C:mitochondrial matrix"/>
    <property type="evidence" value="ECO:0000314"/>
    <property type="project" value="SGD"/>
</dbReference>
<dbReference type="GO" id="GO:0005739">
    <property type="term" value="C:mitochondrion"/>
    <property type="evidence" value="ECO:0000314"/>
    <property type="project" value="SGD"/>
</dbReference>
<dbReference type="GO" id="GO:0030145">
    <property type="term" value="F:manganese ion binding"/>
    <property type="evidence" value="ECO:0000318"/>
    <property type="project" value="GO_Central"/>
</dbReference>
<dbReference type="GO" id="GO:0004784">
    <property type="term" value="F:superoxide dismutase activity"/>
    <property type="evidence" value="ECO:0000314"/>
    <property type="project" value="SGD"/>
</dbReference>
<dbReference type="GO" id="GO:0072593">
    <property type="term" value="P:reactive oxygen species metabolic process"/>
    <property type="evidence" value="ECO:0000315"/>
    <property type="project" value="SGD"/>
</dbReference>
<dbReference type="FunFam" id="1.10.287.990:FF:000001">
    <property type="entry name" value="Superoxide dismutase"/>
    <property type="match status" value="1"/>
</dbReference>
<dbReference type="FunFam" id="3.55.40.20:FF:000002">
    <property type="entry name" value="Superoxide dismutase"/>
    <property type="match status" value="1"/>
</dbReference>
<dbReference type="Gene3D" id="1.10.287.990">
    <property type="entry name" value="Fe,Mn superoxide dismutase (SOD) domain"/>
    <property type="match status" value="1"/>
</dbReference>
<dbReference type="Gene3D" id="3.55.40.20">
    <property type="entry name" value="Iron/manganese superoxide dismutase, C-terminal domain"/>
    <property type="match status" value="1"/>
</dbReference>
<dbReference type="InterPro" id="IPR050265">
    <property type="entry name" value="Fe/Mn_Superoxide_Dismutase"/>
</dbReference>
<dbReference type="InterPro" id="IPR001189">
    <property type="entry name" value="Mn/Fe_SOD"/>
</dbReference>
<dbReference type="InterPro" id="IPR019833">
    <property type="entry name" value="Mn/Fe_SOD_BS"/>
</dbReference>
<dbReference type="InterPro" id="IPR019832">
    <property type="entry name" value="Mn/Fe_SOD_C"/>
</dbReference>
<dbReference type="InterPro" id="IPR019831">
    <property type="entry name" value="Mn/Fe_SOD_N"/>
</dbReference>
<dbReference type="InterPro" id="IPR036324">
    <property type="entry name" value="Mn/Fe_SOD_N_sf"/>
</dbReference>
<dbReference type="InterPro" id="IPR036314">
    <property type="entry name" value="SOD_C_sf"/>
</dbReference>
<dbReference type="PANTHER" id="PTHR11404">
    <property type="entry name" value="SUPEROXIDE DISMUTASE 2"/>
    <property type="match status" value="1"/>
</dbReference>
<dbReference type="PANTHER" id="PTHR11404:SF6">
    <property type="entry name" value="SUPEROXIDE DISMUTASE [MN], MITOCHONDRIAL"/>
    <property type="match status" value="1"/>
</dbReference>
<dbReference type="Pfam" id="PF02777">
    <property type="entry name" value="Sod_Fe_C"/>
    <property type="match status" value="1"/>
</dbReference>
<dbReference type="Pfam" id="PF00081">
    <property type="entry name" value="Sod_Fe_N"/>
    <property type="match status" value="1"/>
</dbReference>
<dbReference type="PIRSF" id="PIRSF000349">
    <property type="entry name" value="SODismutase"/>
    <property type="match status" value="1"/>
</dbReference>
<dbReference type="PRINTS" id="PR01703">
    <property type="entry name" value="MNSODISMTASE"/>
</dbReference>
<dbReference type="SUPFAM" id="SSF54719">
    <property type="entry name" value="Fe,Mn superoxide dismutase (SOD), C-terminal domain"/>
    <property type="match status" value="1"/>
</dbReference>
<dbReference type="SUPFAM" id="SSF46609">
    <property type="entry name" value="Fe,Mn superoxide dismutase (SOD), N-terminal domain"/>
    <property type="match status" value="1"/>
</dbReference>
<dbReference type="PROSITE" id="PS00088">
    <property type="entry name" value="SOD_MN"/>
    <property type="match status" value="1"/>
</dbReference>
<name>SODM_YEAST</name>
<protein>
    <recommendedName>
        <fullName>Superoxide dismutase [Mn], mitochondrial</fullName>
        <ecNumber evidence="2">1.15.1.1</ecNumber>
    </recommendedName>
</protein>
<reference key="1">
    <citation type="journal article" date="1985" name="Eur. J. Biochem.">
        <title>Nucleotide sequence analysis of the nuclear gene coding for manganese superoxide dismutase of yeast mitochondria, a gene previously assumed to code for the Rieske iron-sulphur protein.</title>
        <authorList>
            <person name="Marres C.A.M."/>
            <person name="van Loon A.P.G.M."/>
            <person name="Oudshoorn P."/>
            <person name="van Steeg H."/>
            <person name="Grivell L.A."/>
            <person name="Slater E.C."/>
        </authorList>
    </citation>
    <scope>NUCLEOTIDE SEQUENCE [GENOMIC DNA]</scope>
</reference>
<reference key="2">
    <citation type="journal article" date="1994" name="Science">
        <title>Complete nucleotide sequence of Saccharomyces cerevisiae chromosome VIII.</title>
        <authorList>
            <person name="Johnston M."/>
            <person name="Andrews S."/>
            <person name="Brinkman R."/>
            <person name="Cooper J."/>
            <person name="Ding H."/>
            <person name="Dover J."/>
            <person name="Du Z."/>
            <person name="Favello A."/>
            <person name="Fulton L."/>
            <person name="Gattung S."/>
            <person name="Geisel C."/>
            <person name="Kirsten J."/>
            <person name="Kucaba T."/>
            <person name="Hillier L.W."/>
            <person name="Jier M."/>
            <person name="Johnston L."/>
            <person name="Langston Y."/>
            <person name="Latreille P."/>
            <person name="Louis E.J."/>
            <person name="Macri C."/>
            <person name="Mardis E."/>
            <person name="Menezes S."/>
            <person name="Mouser L."/>
            <person name="Nhan M."/>
            <person name="Rifkin L."/>
            <person name="Riles L."/>
            <person name="St Peter H."/>
            <person name="Trevaskis E."/>
            <person name="Vaughan K."/>
            <person name="Vignati D."/>
            <person name="Wilcox L."/>
            <person name="Wohldman P."/>
            <person name="Waterston R."/>
            <person name="Wilson R."/>
            <person name="Vaudin M."/>
        </authorList>
    </citation>
    <scope>NUCLEOTIDE SEQUENCE [LARGE SCALE GENOMIC DNA]</scope>
    <source>
        <strain>ATCC 204508 / S288c</strain>
    </source>
</reference>
<reference key="3">
    <citation type="journal article" date="2014" name="G3 (Bethesda)">
        <title>The reference genome sequence of Saccharomyces cerevisiae: Then and now.</title>
        <authorList>
            <person name="Engel S.R."/>
            <person name="Dietrich F.S."/>
            <person name="Fisk D.G."/>
            <person name="Binkley G."/>
            <person name="Balakrishnan R."/>
            <person name="Costanzo M.C."/>
            <person name="Dwight S.S."/>
            <person name="Hitz B.C."/>
            <person name="Karra K."/>
            <person name="Nash R.S."/>
            <person name="Weng S."/>
            <person name="Wong E.D."/>
            <person name="Lloyd P."/>
            <person name="Skrzypek M.S."/>
            <person name="Miyasato S.R."/>
            <person name="Simison M."/>
            <person name="Cherry J.M."/>
        </authorList>
    </citation>
    <scope>GENOME REANNOTATION</scope>
    <source>
        <strain>ATCC 204508 / S288c</strain>
    </source>
</reference>
<reference key="4">
    <citation type="journal article" date="2007" name="Genome Res.">
        <title>Approaching a complete repository of sequence-verified protein-encoding clones for Saccharomyces cerevisiae.</title>
        <authorList>
            <person name="Hu Y."/>
            <person name="Rolfs A."/>
            <person name="Bhullar B."/>
            <person name="Murthy T.V.S."/>
            <person name="Zhu C."/>
            <person name="Berger M.F."/>
            <person name="Camargo A.A."/>
            <person name="Kelley F."/>
            <person name="McCarron S."/>
            <person name="Jepson D."/>
            <person name="Richardson A."/>
            <person name="Raphael J."/>
            <person name="Moreira D."/>
            <person name="Taycher E."/>
            <person name="Zuo D."/>
            <person name="Mohr S."/>
            <person name="Kane M.F."/>
            <person name="Williamson J."/>
            <person name="Simpson A.J.G."/>
            <person name="Bulyk M.L."/>
            <person name="Harlow E."/>
            <person name="Marsischky G."/>
            <person name="Kolodner R.D."/>
            <person name="LaBaer J."/>
        </authorList>
    </citation>
    <scope>NUCLEOTIDE SEQUENCE [GENOMIC DNA]</scope>
    <source>
        <strain>ATCC 204508 / S288c</strain>
    </source>
</reference>
<reference key="5">
    <citation type="journal article" date="1988" name="Gene">
        <title>Functional expression of the yeast Mn-superoxide dismutase gene in Escherichia coli requires deletion of the signal peptide sequence.</title>
        <authorList>
            <person name="Schrank I.S."/>
            <person name="Sims P.F."/>
            <person name="Oliver S.G."/>
        </authorList>
    </citation>
    <scope>NUCLEOTIDE SEQUENCE [GENOMIC DNA] OF 1-39</scope>
</reference>
<reference key="6">
    <citation type="journal article" date="1982" name="Carlsberg Res. Commun.">
        <title>The complete amino acid sequence of manganese-superoxide dismutase from Saccharomyces cerevisae.</title>
        <authorList>
            <person name="Ditlow C."/>
            <person name="Johansen J.T."/>
            <person name="Martin B.M."/>
            <person name="Svendsen I."/>
        </authorList>
    </citation>
    <scope>PROTEIN SEQUENCE OF 27-233</scope>
</reference>
<reference key="7">
    <citation type="journal article" date="2003" name="Nature">
        <title>Global analysis of protein expression in yeast.</title>
        <authorList>
            <person name="Ghaemmaghami S."/>
            <person name="Huh W.-K."/>
            <person name="Bower K."/>
            <person name="Howson R.W."/>
            <person name="Belle A."/>
            <person name="Dephoure N."/>
            <person name="O'Shea E.K."/>
            <person name="Weissman J.S."/>
        </authorList>
    </citation>
    <scope>LEVEL OF PROTEIN EXPRESSION [LARGE SCALE ANALYSIS]</scope>
</reference>
<reference key="8">
    <citation type="journal article" date="2007" name="Mol. Cell. Proteomics">
        <title>Profiling phosphoproteins of yeast mitochondria reveals a role of phosphorylation in assembly of the ATP synthase.</title>
        <authorList>
            <person name="Reinders J."/>
            <person name="Wagner K."/>
            <person name="Zahedi R.P."/>
            <person name="Stojanovski D."/>
            <person name="Eyrich B."/>
            <person name="van der Laan M."/>
            <person name="Rehling P."/>
            <person name="Sickmann A."/>
            <person name="Pfanner N."/>
            <person name="Meisinger C."/>
        </authorList>
    </citation>
    <scope>PHOSPHORYLATION [LARGE SCALE ANALYSIS] AT THR-147 AND THR-149</scope>
    <scope>IDENTIFICATION BY MASS SPECTROMETRY [LARGE SCALE ANALYSIS]</scope>
    <source>
        <strain>ATCC 76625 / YPH499</strain>
    </source>
</reference>